<dbReference type="EC" id="3.6.4.-"/>
<dbReference type="EMBL" id="EU915246">
    <property type="protein sequence ID" value="ACI63222.1"/>
    <property type="molecule type" value="mRNA"/>
</dbReference>
<dbReference type="EMBL" id="Z97339">
    <property type="protein sequence ID" value="CAB10335.1"/>
    <property type="status" value="ALT_SEQ"/>
    <property type="molecule type" value="Genomic_DNA"/>
</dbReference>
<dbReference type="EMBL" id="AL161542">
    <property type="protein sequence ID" value="CAB78599.1"/>
    <property type="status" value="ALT_SEQ"/>
    <property type="molecule type" value="Genomic_DNA"/>
</dbReference>
<dbReference type="EMBL" id="CP002687">
    <property type="protein sequence ID" value="AEE83627.1"/>
    <property type="molecule type" value="Genomic_DNA"/>
</dbReference>
<dbReference type="EMBL" id="CP002687">
    <property type="protein sequence ID" value="ANM67158.1"/>
    <property type="molecule type" value="Genomic_DNA"/>
</dbReference>
<dbReference type="PIR" id="E71420">
    <property type="entry name" value="E71420"/>
</dbReference>
<dbReference type="RefSeq" id="NP_001329005.1">
    <property type="nucleotide sequence ID" value="NM_001341064.1"/>
</dbReference>
<dbReference type="RefSeq" id="NP_193292.3">
    <property type="nucleotide sequence ID" value="NM_117648.8"/>
</dbReference>
<dbReference type="SMR" id="B6SFA4"/>
<dbReference type="BioGRID" id="12529">
    <property type="interactions" value="16"/>
</dbReference>
<dbReference type="FunCoup" id="B6SFA4">
    <property type="interactions" value="335"/>
</dbReference>
<dbReference type="STRING" id="3702.B6SFA4"/>
<dbReference type="iPTMnet" id="B6SFA4"/>
<dbReference type="PaxDb" id="3702-AT4G15570.1"/>
<dbReference type="ProteomicsDB" id="238229"/>
<dbReference type="EnsemblPlants" id="AT4G15570.1">
    <property type="protein sequence ID" value="AT4G15570.1"/>
    <property type="gene ID" value="AT4G15570"/>
</dbReference>
<dbReference type="EnsemblPlants" id="AT4G15570.3">
    <property type="protein sequence ID" value="AT4G15570.3"/>
    <property type="gene ID" value="AT4G15570"/>
</dbReference>
<dbReference type="GeneID" id="827233"/>
<dbReference type="Gramene" id="AT4G15570.1">
    <property type="protein sequence ID" value="AT4G15570.1"/>
    <property type="gene ID" value="AT4G15570"/>
</dbReference>
<dbReference type="Gramene" id="AT4G15570.3">
    <property type="protein sequence ID" value="AT4G15570.3"/>
    <property type="gene ID" value="AT4G15570"/>
</dbReference>
<dbReference type="KEGG" id="ath:AT4G15570"/>
<dbReference type="Araport" id="AT4G15570"/>
<dbReference type="TAIR" id="AT4G15570">
    <property type="gene designation" value="MAA3"/>
</dbReference>
<dbReference type="eggNOG" id="KOG1801">
    <property type="taxonomic scope" value="Eukaryota"/>
</dbReference>
<dbReference type="HOGENOM" id="CLU_001666_11_2_1"/>
<dbReference type="InParanoid" id="B6SFA4"/>
<dbReference type="PhylomeDB" id="B6SFA4"/>
<dbReference type="PRO" id="PR:B6SFA4"/>
<dbReference type="Proteomes" id="UP000006548">
    <property type="component" value="Chromosome 4"/>
</dbReference>
<dbReference type="ExpressionAtlas" id="B6SFA4">
    <property type="expression patterns" value="baseline and differential"/>
</dbReference>
<dbReference type="GO" id="GO:0005634">
    <property type="term" value="C:nucleus"/>
    <property type="evidence" value="ECO:0007669"/>
    <property type="project" value="UniProtKB-SubCell"/>
</dbReference>
<dbReference type="GO" id="GO:0005524">
    <property type="term" value="F:ATP binding"/>
    <property type="evidence" value="ECO:0007669"/>
    <property type="project" value="UniProtKB-KW"/>
</dbReference>
<dbReference type="GO" id="GO:0004386">
    <property type="term" value="F:helicase activity"/>
    <property type="evidence" value="ECO:0007669"/>
    <property type="project" value="UniProtKB-KW"/>
</dbReference>
<dbReference type="GO" id="GO:0016787">
    <property type="term" value="F:hydrolase activity"/>
    <property type="evidence" value="ECO:0007669"/>
    <property type="project" value="UniProtKB-KW"/>
</dbReference>
<dbReference type="GO" id="GO:0009553">
    <property type="term" value="P:embryo sac development"/>
    <property type="evidence" value="ECO:0000315"/>
    <property type="project" value="TAIR"/>
</dbReference>
<dbReference type="GO" id="GO:0010183">
    <property type="term" value="P:pollen tube guidance"/>
    <property type="evidence" value="ECO:0000315"/>
    <property type="project" value="TAIR"/>
</dbReference>
<dbReference type="GO" id="GO:0009875">
    <property type="term" value="P:pollen-pistil interaction"/>
    <property type="evidence" value="ECO:0000315"/>
    <property type="project" value="TAIR"/>
</dbReference>
<dbReference type="CDD" id="cd18042">
    <property type="entry name" value="DEXXQc_SETX"/>
    <property type="match status" value="1"/>
</dbReference>
<dbReference type="CDD" id="cd18808">
    <property type="entry name" value="SF1_C_Upf1"/>
    <property type="match status" value="1"/>
</dbReference>
<dbReference type="FunFam" id="3.40.50.300:FF:002371">
    <property type="entry name" value="Predicted protein"/>
    <property type="match status" value="1"/>
</dbReference>
<dbReference type="Gene3D" id="3.40.50.300">
    <property type="entry name" value="P-loop containing nucleotide triphosphate hydrolases"/>
    <property type="match status" value="2"/>
</dbReference>
<dbReference type="InterPro" id="IPR045055">
    <property type="entry name" value="DNA2/NAM7-like"/>
</dbReference>
<dbReference type="InterPro" id="IPR041679">
    <property type="entry name" value="DNA2/NAM7-like_C"/>
</dbReference>
<dbReference type="InterPro" id="IPR041677">
    <property type="entry name" value="DNA2/NAM7_AAA_11"/>
</dbReference>
<dbReference type="InterPro" id="IPR027417">
    <property type="entry name" value="P-loop_NTPase"/>
</dbReference>
<dbReference type="InterPro" id="IPR047187">
    <property type="entry name" value="SF1_C_Upf1"/>
</dbReference>
<dbReference type="PANTHER" id="PTHR10887">
    <property type="entry name" value="DNA2/NAM7 HELICASE FAMILY"/>
    <property type="match status" value="1"/>
</dbReference>
<dbReference type="PANTHER" id="PTHR10887:SF538">
    <property type="entry name" value="HELICASE MAGATAMA 3-RELATED"/>
    <property type="match status" value="1"/>
</dbReference>
<dbReference type="Pfam" id="PF13086">
    <property type="entry name" value="AAA_11"/>
    <property type="match status" value="2"/>
</dbReference>
<dbReference type="Pfam" id="PF13087">
    <property type="entry name" value="AAA_12"/>
    <property type="match status" value="1"/>
</dbReference>
<dbReference type="SUPFAM" id="SSF52540">
    <property type="entry name" value="P-loop containing nucleoside triphosphate hydrolases"/>
    <property type="match status" value="2"/>
</dbReference>
<proteinExistence type="evidence at transcript level"/>
<sequence>MAIDNGKLQEEEASSVTRFYNIILGWDYKQLTKENERKNRKDSKEKLNVVKNTYKDVDDYFETFEPLLFEEVKAQILQNKDGEEASVCKMRLVMECNEGEGFHFLLVTYEHEEDEYLAQNDLLLLSKEEVKGNSFPSSYGFAVVEHRQNNLLRLRMYLAEDIVQITKNTKSSRTKSFIQALSNMRSLITSSASPIDKRVFSLKLCGLSTIIREYIALRSVSSLPFKDLIFTAAEKSCGFGDEAWKISGPLNEFFNENLNKSQKEAIDVGLSRKSFVLIQGPPGTGKTQTILSILGAIMHATPARVQSKGTDHEVKRGIQMTIQEKYNHWGRASPWILGVNPRDAIMPEDGDDGFFPTSGNELKPEVVNASRKYRLRVLVCAPSNSALDEIVLRLLSSGLRDENAQTYTPKIVRIGLKAHHSVASVSLDHLVAQKRGSAIDKPKQGTTGTDIDSIRTAILEEAAIVFATLSFSGSALLAKSNRGFDVVIIDEAAQAVEPATLIPLATRCKQVFLVGDPKQLPATVISTVAQDSGYGTSMFERLQKAGYPVKMLKTQYRMHPEIRSFPSKQFYEGALEDGSDIEAQTTRDWHKYRCFGPFCFFDIHEGKESQHPGATGSRVNLDEVEFVLLIYHRLVTMYPELKSSSQLAIISPYNYQVKTFKDRFKEMFGTEAEKVVDINTVDGFQGREKDVAIFSCVRANENGQIGFLSNSRRMNVGITRAKSSVLVVGSAATLKSDPLWKNLIESAEQRNRLFKVSKPLNNFFSEENLETMKLTEDMEIPDAPLYEDESLPVAPYGGDDDFGDGDADQDDVAMAGED</sequence>
<organism>
    <name type="scientific">Arabidopsis thaliana</name>
    <name type="common">Mouse-ear cress</name>
    <dbReference type="NCBI Taxonomy" id="3702"/>
    <lineage>
        <taxon>Eukaryota</taxon>
        <taxon>Viridiplantae</taxon>
        <taxon>Streptophyta</taxon>
        <taxon>Embryophyta</taxon>
        <taxon>Tracheophyta</taxon>
        <taxon>Spermatophyta</taxon>
        <taxon>Magnoliopsida</taxon>
        <taxon>eudicotyledons</taxon>
        <taxon>Gunneridae</taxon>
        <taxon>Pentapetalae</taxon>
        <taxon>rosids</taxon>
        <taxon>malvids</taxon>
        <taxon>Brassicales</taxon>
        <taxon>Brassicaceae</taxon>
        <taxon>Camelineae</taxon>
        <taxon>Arabidopsis</taxon>
    </lineage>
</organism>
<name>MAA3_ARATH</name>
<gene>
    <name type="primary">MAA3</name>
    <name type="ordered locus">At4g15570</name>
    <name type="ORF">dl3825w</name>
</gene>
<keyword id="KW-0067">ATP-binding</keyword>
<keyword id="KW-0347">Helicase</keyword>
<keyword id="KW-0378">Hydrolase</keyword>
<keyword id="KW-0547">Nucleotide-binding</keyword>
<keyword id="KW-0539">Nucleus</keyword>
<keyword id="KW-1185">Reference proteome</keyword>
<accession>B6SFA4</accession>
<accession>O23408</accession>
<evidence type="ECO:0000250" key="1"/>
<evidence type="ECO:0000256" key="2">
    <source>
        <dbReference type="SAM" id="MobiDB-lite"/>
    </source>
</evidence>
<evidence type="ECO:0000269" key="3">
    <source>
    </source>
</evidence>
<evidence type="ECO:0000269" key="4">
    <source>
    </source>
</evidence>
<evidence type="ECO:0000305" key="5"/>
<feature type="chain" id="PRO_0000416787" description="Probable helicase MAGATAMA 3">
    <location>
        <begin position="1"/>
        <end position="818"/>
    </location>
</feature>
<feature type="domain" description="UvrD-like helicase ATP-binding">
    <location>
        <begin position="259"/>
        <end position="559"/>
    </location>
</feature>
<feature type="region of interest" description="Disordered" evidence="2">
    <location>
        <begin position="781"/>
        <end position="818"/>
    </location>
</feature>
<feature type="compositionally biased region" description="Acidic residues" evidence="2">
    <location>
        <begin position="781"/>
        <end position="790"/>
    </location>
</feature>
<feature type="compositionally biased region" description="Acidic residues" evidence="2">
    <location>
        <begin position="798"/>
        <end position="818"/>
    </location>
</feature>
<feature type="binding site" evidence="1">
    <location>
        <begin position="280"/>
        <end position="287"/>
    </location>
    <ligand>
        <name>ATP</name>
        <dbReference type="ChEBI" id="CHEBI:30616"/>
    </ligand>
</feature>
<comment type="function">
    <text evidence="3 4">Probable helicase that may regulate RNA molecules involved in nucleolar organization and pollen tube guidance.</text>
</comment>
<comment type="subcellular location">
    <subcellularLocation>
        <location evidence="5">Nucleus</location>
    </subcellularLocation>
</comment>
<comment type="tissue specificity">
    <text evidence="4">Expressed in flowers, siliques, leaves, roots and shoot apex.</text>
</comment>
<comment type="disruption phenotype">
    <text evidence="3">Defective in female gametophyte development and micropylar pollen tube guidance leading to zygotic lethality. Reduced size of nucleoli of polar nuclei in female gametophyte.</text>
</comment>
<comment type="similarity">
    <text evidence="5">Belongs to the helicase family.</text>
</comment>
<comment type="sequence caution" evidence="5">
    <conflict type="erroneous gene model prediction">
        <sequence resource="EMBL-CDS" id="CAB10335"/>
    </conflict>
</comment>
<comment type="sequence caution" evidence="5">
    <conflict type="erroneous gene model prediction">
        <sequence resource="EMBL-CDS" id="CAB78599"/>
    </conflict>
</comment>
<reference key="1">
    <citation type="journal article" date="2008" name="Plant Cell Physiol.">
        <title>MAA3 (MAGATAMA3) helicase gene is required for female gametophyte development and pollen tube guidance in Arabidopsis thaliana.</title>
        <authorList>
            <person name="Shimizu K.K."/>
            <person name="Ito T."/>
            <person name="Ishiguro S."/>
            <person name="Okada K."/>
        </authorList>
    </citation>
    <scope>NUCLEOTIDE SEQUENCE [MRNA]</scope>
    <scope>FUNCTION</scope>
    <scope>TISSUE SPECIFICITY</scope>
    <source>
        <strain>cv. Wassilewskija-2</strain>
    </source>
</reference>
<reference key="2">
    <citation type="journal article" date="1998" name="Nature">
        <title>Analysis of 1.9 Mb of contiguous sequence from chromosome 4 of Arabidopsis thaliana.</title>
        <authorList>
            <person name="Bevan M."/>
            <person name="Bancroft I."/>
            <person name="Bent E."/>
            <person name="Love K."/>
            <person name="Goodman H.M."/>
            <person name="Dean C."/>
            <person name="Bergkamp R."/>
            <person name="Dirkse W."/>
            <person name="van Staveren M."/>
            <person name="Stiekema W."/>
            <person name="Drost L."/>
            <person name="Ridley P."/>
            <person name="Hudson S.-A."/>
            <person name="Patel K."/>
            <person name="Murphy G."/>
            <person name="Piffanelli P."/>
            <person name="Wedler H."/>
            <person name="Wedler E."/>
            <person name="Wambutt R."/>
            <person name="Weitzenegger T."/>
            <person name="Pohl T."/>
            <person name="Terryn N."/>
            <person name="Gielen J."/>
            <person name="Villarroel R."/>
            <person name="De Clercq R."/>
            <person name="van Montagu M."/>
            <person name="Lecharny A."/>
            <person name="Aubourg S."/>
            <person name="Gy I."/>
            <person name="Kreis M."/>
            <person name="Lao N."/>
            <person name="Kavanagh T."/>
            <person name="Hempel S."/>
            <person name="Kotter P."/>
            <person name="Entian K.-D."/>
            <person name="Rieger M."/>
            <person name="Schaefer M."/>
            <person name="Funk B."/>
            <person name="Mueller-Auer S."/>
            <person name="Silvey M."/>
            <person name="James R."/>
            <person name="Monfort A."/>
            <person name="Pons A."/>
            <person name="Puigdomenech P."/>
            <person name="Douka A."/>
            <person name="Voukelatou E."/>
            <person name="Milioni D."/>
            <person name="Hatzopoulos P."/>
            <person name="Piravandi E."/>
            <person name="Obermaier B."/>
            <person name="Hilbert H."/>
            <person name="Duesterhoeft A."/>
            <person name="Moores T."/>
            <person name="Jones J.D.G."/>
            <person name="Eneva T."/>
            <person name="Palme K."/>
            <person name="Benes V."/>
            <person name="Rechmann S."/>
            <person name="Ansorge W."/>
            <person name="Cooke R."/>
            <person name="Berger C."/>
            <person name="Delseny M."/>
            <person name="Voet M."/>
            <person name="Volckaert G."/>
            <person name="Mewes H.-W."/>
            <person name="Klosterman S."/>
            <person name="Schueller C."/>
            <person name="Chalwatzis N."/>
        </authorList>
    </citation>
    <scope>NUCLEOTIDE SEQUENCE [LARGE SCALE GENOMIC DNA]</scope>
    <source>
        <strain>cv. Columbia</strain>
    </source>
</reference>
<reference key="3">
    <citation type="journal article" date="1999" name="Nature">
        <title>Sequence and analysis of chromosome 4 of the plant Arabidopsis thaliana.</title>
        <authorList>
            <person name="Mayer K.F.X."/>
            <person name="Schueller C."/>
            <person name="Wambutt R."/>
            <person name="Murphy G."/>
            <person name="Volckaert G."/>
            <person name="Pohl T."/>
            <person name="Duesterhoeft A."/>
            <person name="Stiekema W."/>
            <person name="Entian K.-D."/>
            <person name="Terryn N."/>
            <person name="Harris B."/>
            <person name="Ansorge W."/>
            <person name="Brandt P."/>
            <person name="Grivell L.A."/>
            <person name="Rieger M."/>
            <person name="Weichselgartner M."/>
            <person name="de Simone V."/>
            <person name="Obermaier B."/>
            <person name="Mache R."/>
            <person name="Mueller M."/>
            <person name="Kreis M."/>
            <person name="Delseny M."/>
            <person name="Puigdomenech P."/>
            <person name="Watson M."/>
            <person name="Schmidtheini T."/>
            <person name="Reichert B."/>
            <person name="Portetelle D."/>
            <person name="Perez-Alonso M."/>
            <person name="Boutry M."/>
            <person name="Bancroft I."/>
            <person name="Vos P."/>
            <person name="Hoheisel J."/>
            <person name="Zimmermann W."/>
            <person name="Wedler H."/>
            <person name="Ridley P."/>
            <person name="Langham S.-A."/>
            <person name="McCullagh B."/>
            <person name="Bilham L."/>
            <person name="Robben J."/>
            <person name="van der Schueren J."/>
            <person name="Grymonprez B."/>
            <person name="Chuang Y.-J."/>
            <person name="Vandenbussche F."/>
            <person name="Braeken M."/>
            <person name="Weltjens I."/>
            <person name="Voet M."/>
            <person name="Bastiaens I."/>
            <person name="Aert R."/>
            <person name="Defoor E."/>
            <person name="Weitzenegger T."/>
            <person name="Bothe G."/>
            <person name="Ramsperger U."/>
            <person name="Hilbert H."/>
            <person name="Braun M."/>
            <person name="Holzer E."/>
            <person name="Brandt A."/>
            <person name="Peters S."/>
            <person name="van Staveren M."/>
            <person name="Dirkse W."/>
            <person name="Mooijman P."/>
            <person name="Klein Lankhorst R."/>
            <person name="Rose M."/>
            <person name="Hauf J."/>
            <person name="Koetter P."/>
            <person name="Berneiser S."/>
            <person name="Hempel S."/>
            <person name="Feldpausch M."/>
            <person name="Lamberth S."/>
            <person name="Van den Daele H."/>
            <person name="De Keyser A."/>
            <person name="Buysshaert C."/>
            <person name="Gielen J."/>
            <person name="Villarroel R."/>
            <person name="De Clercq R."/>
            <person name="van Montagu M."/>
            <person name="Rogers J."/>
            <person name="Cronin A."/>
            <person name="Quail M.A."/>
            <person name="Bray-Allen S."/>
            <person name="Clark L."/>
            <person name="Doggett J."/>
            <person name="Hall S."/>
            <person name="Kay M."/>
            <person name="Lennard N."/>
            <person name="McLay K."/>
            <person name="Mayes R."/>
            <person name="Pettett A."/>
            <person name="Rajandream M.A."/>
            <person name="Lyne M."/>
            <person name="Benes V."/>
            <person name="Rechmann S."/>
            <person name="Borkova D."/>
            <person name="Bloecker H."/>
            <person name="Scharfe M."/>
            <person name="Grimm M."/>
            <person name="Loehnert T.-H."/>
            <person name="Dose S."/>
            <person name="de Haan M."/>
            <person name="Maarse A.C."/>
            <person name="Schaefer M."/>
            <person name="Mueller-Auer S."/>
            <person name="Gabel C."/>
            <person name="Fuchs M."/>
            <person name="Fartmann B."/>
            <person name="Granderath K."/>
            <person name="Dauner D."/>
            <person name="Herzl A."/>
            <person name="Neumann S."/>
            <person name="Argiriou A."/>
            <person name="Vitale D."/>
            <person name="Liguori R."/>
            <person name="Piravandi E."/>
            <person name="Massenet O."/>
            <person name="Quigley F."/>
            <person name="Clabauld G."/>
            <person name="Muendlein A."/>
            <person name="Felber R."/>
            <person name="Schnabl S."/>
            <person name="Hiller R."/>
            <person name="Schmidt W."/>
            <person name="Lecharny A."/>
            <person name="Aubourg S."/>
            <person name="Chefdor F."/>
            <person name="Cooke R."/>
            <person name="Berger C."/>
            <person name="Monfort A."/>
            <person name="Casacuberta E."/>
            <person name="Gibbons T."/>
            <person name="Weber N."/>
            <person name="Vandenbol M."/>
            <person name="Bargues M."/>
            <person name="Terol J."/>
            <person name="Torres A."/>
            <person name="Perez-Perez A."/>
            <person name="Purnelle B."/>
            <person name="Bent E."/>
            <person name="Johnson S."/>
            <person name="Tacon D."/>
            <person name="Jesse T."/>
            <person name="Heijnen L."/>
            <person name="Schwarz S."/>
            <person name="Scholler P."/>
            <person name="Heber S."/>
            <person name="Francs P."/>
            <person name="Bielke C."/>
            <person name="Frishman D."/>
            <person name="Haase D."/>
            <person name="Lemcke K."/>
            <person name="Mewes H.-W."/>
            <person name="Stocker S."/>
            <person name="Zaccaria P."/>
            <person name="Bevan M."/>
            <person name="Wilson R.K."/>
            <person name="de la Bastide M."/>
            <person name="Habermann K."/>
            <person name="Parnell L."/>
            <person name="Dedhia N."/>
            <person name="Gnoj L."/>
            <person name="Schutz K."/>
            <person name="Huang E."/>
            <person name="Spiegel L."/>
            <person name="Sekhon M."/>
            <person name="Murray J."/>
            <person name="Sheet P."/>
            <person name="Cordes M."/>
            <person name="Abu-Threideh J."/>
            <person name="Stoneking T."/>
            <person name="Kalicki J."/>
            <person name="Graves T."/>
            <person name="Harmon G."/>
            <person name="Edwards J."/>
            <person name="Latreille P."/>
            <person name="Courtney L."/>
            <person name="Cloud J."/>
            <person name="Abbott A."/>
            <person name="Scott K."/>
            <person name="Johnson D."/>
            <person name="Minx P."/>
            <person name="Bentley D."/>
            <person name="Fulton B."/>
            <person name="Miller N."/>
            <person name="Greco T."/>
            <person name="Kemp K."/>
            <person name="Kramer J."/>
            <person name="Fulton L."/>
            <person name="Mardis E."/>
            <person name="Dante M."/>
            <person name="Pepin K."/>
            <person name="Hillier L.W."/>
            <person name="Nelson J."/>
            <person name="Spieth J."/>
            <person name="Ryan E."/>
            <person name="Andrews S."/>
            <person name="Geisel C."/>
            <person name="Layman D."/>
            <person name="Du H."/>
            <person name="Ali J."/>
            <person name="Berghoff A."/>
            <person name="Jones K."/>
            <person name="Drone K."/>
            <person name="Cotton M."/>
            <person name="Joshu C."/>
            <person name="Antonoiu B."/>
            <person name="Zidanic M."/>
            <person name="Strong C."/>
            <person name="Sun H."/>
            <person name="Lamar B."/>
            <person name="Yordan C."/>
            <person name="Ma P."/>
            <person name="Zhong J."/>
            <person name="Preston R."/>
            <person name="Vil D."/>
            <person name="Shekher M."/>
            <person name="Matero A."/>
            <person name="Shah R."/>
            <person name="Swaby I.K."/>
            <person name="O'Shaughnessy A."/>
            <person name="Rodriguez M."/>
            <person name="Hoffman J."/>
            <person name="Till S."/>
            <person name="Granat S."/>
            <person name="Shohdy N."/>
            <person name="Hasegawa A."/>
            <person name="Hameed A."/>
            <person name="Lodhi M."/>
            <person name="Johnson A."/>
            <person name="Chen E."/>
            <person name="Marra M.A."/>
            <person name="Martienssen R."/>
            <person name="McCombie W.R."/>
        </authorList>
    </citation>
    <scope>NUCLEOTIDE SEQUENCE [LARGE SCALE GENOMIC DNA]</scope>
    <source>
        <strain>cv. Columbia</strain>
    </source>
</reference>
<reference key="4">
    <citation type="journal article" date="2017" name="Plant J.">
        <title>Araport11: a complete reannotation of the Arabidopsis thaliana reference genome.</title>
        <authorList>
            <person name="Cheng C.Y."/>
            <person name="Krishnakumar V."/>
            <person name="Chan A.P."/>
            <person name="Thibaud-Nissen F."/>
            <person name="Schobel S."/>
            <person name="Town C.D."/>
        </authorList>
    </citation>
    <scope>GENOME REANNOTATION</scope>
    <source>
        <strain>cv. Columbia</strain>
    </source>
</reference>
<reference key="5">
    <citation type="journal article" date="2000" name="Development">
        <title>Attractive and repulsive interactions between female and male gametophytes in Arabidopsis pollen tube guidance.</title>
        <authorList>
            <person name="Shimizu K.K."/>
            <person name="Okada K."/>
        </authorList>
    </citation>
    <scope>FUNCTION</scope>
    <scope>DISRUPTION PHENOTYPE</scope>
    <source>
        <strain>cv. Wassilewskija-2</strain>
    </source>
</reference>
<reference key="6">
    <citation type="journal article" date="2013" name="PLoS ONE">
        <title>Genome-wide comparative in silico analysis of the RNA helicase gene family in Zea mays and Glycine max: a comparison with Arabidopsis and Oryza sativa.</title>
        <authorList>
            <person name="Xu R."/>
            <person name="Zhang S."/>
            <person name="Huang J."/>
            <person name="Zheng C."/>
        </authorList>
    </citation>
    <scope>GENE FAMILY</scope>
</reference>
<protein>
    <recommendedName>
        <fullName>Probable helicase MAGATAMA 3</fullName>
        <ecNumber>3.6.4.-</ecNumber>
    </recommendedName>
    <alternativeName>
        <fullName>SEN1-like protein</fullName>
    </alternativeName>
</protein>